<organism>
    <name type="scientific">Acinetobacter baylyi (strain ATCC 33305 / BD413 / ADP1)</name>
    <dbReference type="NCBI Taxonomy" id="62977"/>
    <lineage>
        <taxon>Bacteria</taxon>
        <taxon>Pseudomonadati</taxon>
        <taxon>Pseudomonadota</taxon>
        <taxon>Gammaproteobacteria</taxon>
        <taxon>Moraxellales</taxon>
        <taxon>Moraxellaceae</taxon>
        <taxon>Acinetobacter</taxon>
    </lineage>
</organism>
<accession>Q6F8H8</accession>
<sequence length="217" mass="24988">MQHEFWHQRWQENRIGFHQFTPSPLLVDYFNELGLKTSARIFVPLSGKTLDISWLLQQGYHVVAIELSQIAVTSLIEQLVEDFDIQFESSEKNNLIHYHHPQIDIFVGDFFDLSKEQLGQVDAIFDRAALIALPDDIRQDYVQHLIEISGAASQFLISYQYDAGSHEGPPFSVNAEEIKQLYAEAYDIRLLKEQLVDASQNKGNHPKSTLWILTAKF</sequence>
<gene>
    <name evidence="1" type="primary">tpm</name>
    <name type="ordered locus">ACIAD2922</name>
</gene>
<feature type="chain" id="PRO_0000220115" description="Thiopurine S-methyltransferase">
    <location>
        <begin position="1"/>
        <end position="217"/>
    </location>
</feature>
<feature type="binding site" evidence="1">
    <location>
        <position position="10"/>
    </location>
    <ligand>
        <name>S-adenosyl-L-methionine</name>
        <dbReference type="ChEBI" id="CHEBI:59789"/>
    </ligand>
</feature>
<feature type="binding site" evidence="1">
    <location>
        <position position="45"/>
    </location>
    <ligand>
        <name>S-adenosyl-L-methionine</name>
        <dbReference type="ChEBI" id="CHEBI:59789"/>
    </ligand>
</feature>
<feature type="binding site" evidence="1">
    <location>
        <position position="66"/>
    </location>
    <ligand>
        <name>S-adenosyl-L-methionine</name>
        <dbReference type="ChEBI" id="CHEBI:59789"/>
    </ligand>
</feature>
<feature type="binding site" evidence="1">
    <location>
        <position position="127"/>
    </location>
    <ligand>
        <name>S-adenosyl-L-methionine</name>
        <dbReference type="ChEBI" id="CHEBI:59789"/>
    </ligand>
</feature>
<proteinExistence type="inferred from homology"/>
<comment type="catalytic activity">
    <reaction evidence="1">
        <text>S-adenosyl-L-methionine + a thiopurine = S-adenosyl-L-homocysteine + a thiopurine S-methylether.</text>
        <dbReference type="EC" id="2.1.1.67"/>
    </reaction>
</comment>
<comment type="subcellular location">
    <subcellularLocation>
        <location evidence="1">Cytoplasm</location>
    </subcellularLocation>
</comment>
<comment type="similarity">
    <text evidence="1">Belongs to the class I-like SAM-binding methyltransferase superfamily. TPMT family.</text>
</comment>
<evidence type="ECO:0000255" key="1">
    <source>
        <dbReference type="HAMAP-Rule" id="MF_00812"/>
    </source>
</evidence>
<keyword id="KW-0963">Cytoplasm</keyword>
<keyword id="KW-0489">Methyltransferase</keyword>
<keyword id="KW-0949">S-adenosyl-L-methionine</keyword>
<keyword id="KW-0808">Transferase</keyword>
<protein>
    <recommendedName>
        <fullName evidence="1">Thiopurine S-methyltransferase</fullName>
        <ecNumber evidence="1">2.1.1.67</ecNumber>
    </recommendedName>
    <alternativeName>
        <fullName evidence="1">Thiopurine methyltransferase</fullName>
    </alternativeName>
</protein>
<name>TPMT_ACIAD</name>
<reference key="1">
    <citation type="journal article" date="2004" name="Nucleic Acids Res.">
        <title>Unique features revealed by the genome sequence of Acinetobacter sp. ADP1, a versatile and naturally transformation competent bacterium.</title>
        <authorList>
            <person name="Barbe V."/>
            <person name="Vallenet D."/>
            <person name="Fonknechten N."/>
            <person name="Kreimeyer A."/>
            <person name="Oztas S."/>
            <person name="Labarre L."/>
            <person name="Cruveiller S."/>
            <person name="Robert C."/>
            <person name="Duprat S."/>
            <person name="Wincker P."/>
            <person name="Ornston L.N."/>
            <person name="Weissenbach J."/>
            <person name="Marliere P."/>
            <person name="Cohen G.N."/>
            <person name="Medigue C."/>
        </authorList>
    </citation>
    <scope>NUCLEOTIDE SEQUENCE [LARGE SCALE GENOMIC DNA]</scope>
    <source>
        <strain>ATCC 33305 / BD413 / ADP1</strain>
    </source>
</reference>
<dbReference type="EC" id="2.1.1.67" evidence="1"/>
<dbReference type="EMBL" id="CR543861">
    <property type="protein sequence ID" value="CAG69637.1"/>
    <property type="molecule type" value="Genomic_DNA"/>
</dbReference>
<dbReference type="SMR" id="Q6F8H8"/>
<dbReference type="STRING" id="202950.GCA_001485005_02888"/>
<dbReference type="GeneID" id="45235152"/>
<dbReference type="KEGG" id="aci:ACIAD2922"/>
<dbReference type="eggNOG" id="COG0500">
    <property type="taxonomic scope" value="Bacteria"/>
</dbReference>
<dbReference type="HOGENOM" id="CLU_085515_1_0_6"/>
<dbReference type="OrthoDB" id="9778208at2"/>
<dbReference type="BioCyc" id="ASP62977:ACIAD_RS13185-MONOMER"/>
<dbReference type="Proteomes" id="UP000000430">
    <property type="component" value="Chromosome"/>
</dbReference>
<dbReference type="GO" id="GO:0005737">
    <property type="term" value="C:cytoplasm"/>
    <property type="evidence" value="ECO:0007669"/>
    <property type="project" value="UniProtKB-SubCell"/>
</dbReference>
<dbReference type="GO" id="GO:0008119">
    <property type="term" value="F:thiopurine S-methyltransferase activity"/>
    <property type="evidence" value="ECO:0007669"/>
    <property type="project" value="UniProtKB-UniRule"/>
</dbReference>
<dbReference type="GO" id="GO:0032259">
    <property type="term" value="P:methylation"/>
    <property type="evidence" value="ECO:0007669"/>
    <property type="project" value="UniProtKB-KW"/>
</dbReference>
<dbReference type="GO" id="GO:0010038">
    <property type="term" value="P:response to metal ion"/>
    <property type="evidence" value="ECO:0007669"/>
    <property type="project" value="InterPro"/>
</dbReference>
<dbReference type="CDD" id="cd02440">
    <property type="entry name" value="AdoMet_MTases"/>
    <property type="match status" value="1"/>
</dbReference>
<dbReference type="FunFam" id="3.40.50.150:FF:000101">
    <property type="entry name" value="Thiopurine S-methyltransferase"/>
    <property type="match status" value="1"/>
</dbReference>
<dbReference type="Gene3D" id="3.40.50.150">
    <property type="entry name" value="Vaccinia Virus protein VP39"/>
    <property type="match status" value="1"/>
</dbReference>
<dbReference type="HAMAP" id="MF_00812">
    <property type="entry name" value="Thiopur_methtran"/>
    <property type="match status" value="1"/>
</dbReference>
<dbReference type="InterPro" id="IPR029063">
    <property type="entry name" value="SAM-dependent_MTases_sf"/>
</dbReference>
<dbReference type="InterPro" id="IPR022474">
    <property type="entry name" value="Thiopur_S-MeTfrase_Se/Te_detox"/>
</dbReference>
<dbReference type="InterPro" id="IPR025835">
    <property type="entry name" value="Thiopurine_S-MeTrfase"/>
</dbReference>
<dbReference type="InterPro" id="IPR008854">
    <property type="entry name" value="TPMT"/>
</dbReference>
<dbReference type="NCBIfam" id="NF009732">
    <property type="entry name" value="PRK13255.1"/>
    <property type="match status" value="1"/>
</dbReference>
<dbReference type="NCBIfam" id="TIGR03840">
    <property type="entry name" value="TMPT_Se_Te"/>
    <property type="match status" value="1"/>
</dbReference>
<dbReference type="PANTHER" id="PTHR10259">
    <property type="entry name" value="THIOPURINE S-METHYLTRANSFERASE"/>
    <property type="match status" value="1"/>
</dbReference>
<dbReference type="PANTHER" id="PTHR10259:SF11">
    <property type="entry name" value="THIOPURINE S-METHYLTRANSFERASE"/>
    <property type="match status" value="1"/>
</dbReference>
<dbReference type="Pfam" id="PF05724">
    <property type="entry name" value="TPMT"/>
    <property type="match status" value="1"/>
</dbReference>
<dbReference type="PIRSF" id="PIRSF023956">
    <property type="entry name" value="Thiopurine_S-methyltransferase"/>
    <property type="match status" value="1"/>
</dbReference>
<dbReference type="SUPFAM" id="SSF53335">
    <property type="entry name" value="S-adenosyl-L-methionine-dependent methyltransferases"/>
    <property type="match status" value="1"/>
</dbReference>
<dbReference type="PROSITE" id="PS51585">
    <property type="entry name" value="SAM_MT_TPMT"/>
    <property type="match status" value="1"/>
</dbReference>